<protein>
    <recommendedName>
        <fullName evidence="1">Dephospho-CoA kinase</fullName>
        <ecNumber evidence="1">2.7.1.24</ecNumber>
    </recommendedName>
    <alternativeName>
        <fullName evidence="1">Dephosphocoenzyme A kinase</fullName>
    </alternativeName>
</protein>
<proteinExistence type="inferred from homology"/>
<reference key="1">
    <citation type="journal article" date="2004" name="Proc. Natl. Acad. Sci. U.S.A.">
        <title>The genome sequence of the probiotic intestinal bacterium Lactobacillus johnsonii NCC 533.</title>
        <authorList>
            <person name="Pridmore R.D."/>
            <person name="Berger B."/>
            <person name="Desiere F."/>
            <person name="Vilanova D."/>
            <person name="Barretto C."/>
            <person name="Pittet A.-C."/>
            <person name="Zwahlen M.-C."/>
            <person name="Rouvet M."/>
            <person name="Altermann E."/>
            <person name="Barrangou R."/>
            <person name="Mollet B."/>
            <person name="Mercenier A."/>
            <person name="Klaenhammer T."/>
            <person name="Arigoni F."/>
            <person name="Schell M.A."/>
        </authorList>
    </citation>
    <scope>NUCLEOTIDE SEQUENCE [LARGE SCALE GENOMIC DNA]</scope>
    <source>
        <strain>CNCM I-1225 / La1 / NCC 533</strain>
    </source>
</reference>
<comment type="function">
    <text evidence="1">Catalyzes the phosphorylation of the 3'-hydroxyl group of dephosphocoenzyme A to form coenzyme A.</text>
</comment>
<comment type="catalytic activity">
    <reaction evidence="1">
        <text>3'-dephospho-CoA + ATP = ADP + CoA + H(+)</text>
        <dbReference type="Rhea" id="RHEA:18245"/>
        <dbReference type="ChEBI" id="CHEBI:15378"/>
        <dbReference type="ChEBI" id="CHEBI:30616"/>
        <dbReference type="ChEBI" id="CHEBI:57287"/>
        <dbReference type="ChEBI" id="CHEBI:57328"/>
        <dbReference type="ChEBI" id="CHEBI:456216"/>
        <dbReference type="EC" id="2.7.1.24"/>
    </reaction>
</comment>
<comment type="pathway">
    <text evidence="1">Cofactor biosynthesis; coenzyme A biosynthesis; CoA from (R)-pantothenate: step 5/5.</text>
</comment>
<comment type="subcellular location">
    <subcellularLocation>
        <location evidence="1">Cytoplasm</location>
    </subcellularLocation>
</comment>
<comment type="similarity">
    <text evidence="1">Belongs to the CoaE family.</text>
</comment>
<gene>
    <name evidence="1" type="primary">coaE</name>
    <name type="ordered locus">LJ_1649</name>
</gene>
<keyword id="KW-0067">ATP-binding</keyword>
<keyword id="KW-0173">Coenzyme A biosynthesis</keyword>
<keyword id="KW-0963">Cytoplasm</keyword>
<keyword id="KW-0418">Kinase</keyword>
<keyword id="KW-0547">Nucleotide-binding</keyword>
<keyword id="KW-0808">Transferase</keyword>
<organism>
    <name type="scientific">Lactobacillus johnsonii (strain CNCM I-12250 / La1 / NCC 533)</name>
    <dbReference type="NCBI Taxonomy" id="257314"/>
    <lineage>
        <taxon>Bacteria</taxon>
        <taxon>Bacillati</taxon>
        <taxon>Bacillota</taxon>
        <taxon>Bacilli</taxon>
        <taxon>Lactobacillales</taxon>
        <taxon>Lactobacillaceae</taxon>
        <taxon>Lactobacillus</taxon>
    </lineage>
</organism>
<feature type="chain" id="PRO_0000172951" description="Dephospho-CoA kinase">
    <location>
        <begin position="1"/>
        <end position="198"/>
    </location>
</feature>
<feature type="domain" description="DPCK" evidence="1">
    <location>
        <begin position="4"/>
        <end position="198"/>
    </location>
</feature>
<feature type="binding site" evidence="1">
    <location>
        <begin position="12"/>
        <end position="17"/>
    </location>
    <ligand>
        <name>ATP</name>
        <dbReference type="ChEBI" id="CHEBI:30616"/>
    </ligand>
</feature>
<name>COAE_LACJO</name>
<accession>Q74IB6</accession>
<sequence length="198" mass="22255">MTYFLGLTGGIASGKSTADEFFKKKKIPIIDSDLIAHQIMEIGQNGYKAVVDYFGTDILNDDQTINRRKLGGIVFNDKAKLKKLNELTHPLVHQEIKQQMARYRANQEKLVVIDVPLLFESGFESLCNGVLAISITPELQIERLMKRNAFTKKEAVARISNQMPLSEKEKRATYVVANTGTIGDLEKKLSDLLQEIGR</sequence>
<dbReference type="EC" id="2.7.1.24" evidence="1"/>
<dbReference type="EMBL" id="AE017198">
    <property type="protein sequence ID" value="AAS09422.1"/>
    <property type="molecule type" value="Genomic_DNA"/>
</dbReference>
<dbReference type="RefSeq" id="WP_011162338.1">
    <property type="nucleotide sequence ID" value="NC_005362.1"/>
</dbReference>
<dbReference type="SMR" id="Q74IB6"/>
<dbReference type="KEGG" id="ljo:LJ_1649"/>
<dbReference type="PATRIC" id="fig|257314.6.peg.1475"/>
<dbReference type="eggNOG" id="COG0237">
    <property type="taxonomic scope" value="Bacteria"/>
</dbReference>
<dbReference type="HOGENOM" id="CLU_057180_2_1_9"/>
<dbReference type="UniPathway" id="UPA00241">
    <property type="reaction ID" value="UER00356"/>
</dbReference>
<dbReference type="Proteomes" id="UP000000581">
    <property type="component" value="Chromosome"/>
</dbReference>
<dbReference type="GO" id="GO:0005737">
    <property type="term" value="C:cytoplasm"/>
    <property type="evidence" value="ECO:0007669"/>
    <property type="project" value="UniProtKB-SubCell"/>
</dbReference>
<dbReference type="GO" id="GO:0005524">
    <property type="term" value="F:ATP binding"/>
    <property type="evidence" value="ECO:0007669"/>
    <property type="project" value="UniProtKB-UniRule"/>
</dbReference>
<dbReference type="GO" id="GO:0004140">
    <property type="term" value="F:dephospho-CoA kinase activity"/>
    <property type="evidence" value="ECO:0007669"/>
    <property type="project" value="UniProtKB-UniRule"/>
</dbReference>
<dbReference type="GO" id="GO:0015937">
    <property type="term" value="P:coenzyme A biosynthetic process"/>
    <property type="evidence" value="ECO:0007669"/>
    <property type="project" value="UniProtKB-UniRule"/>
</dbReference>
<dbReference type="CDD" id="cd02022">
    <property type="entry name" value="DPCK"/>
    <property type="match status" value="1"/>
</dbReference>
<dbReference type="FunFam" id="3.40.50.300:FF:000991">
    <property type="entry name" value="Dephospho-CoA kinase"/>
    <property type="match status" value="1"/>
</dbReference>
<dbReference type="Gene3D" id="3.40.50.300">
    <property type="entry name" value="P-loop containing nucleotide triphosphate hydrolases"/>
    <property type="match status" value="1"/>
</dbReference>
<dbReference type="HAMAP" id="MF_00376">
    <property type="entry name" value="Dephospho_CoA_kinase"/>
    <property type="match status" value="1"/>
</dbReference>
<dbReference type="InterPro" id="IPR001977">
    <property type="entry name" value="Depp_CoAkinase"/>
</dbReference>
<dbReference type="InterPro" id="IPR027417">
    <property type="entry name" value="P-loop_NTPase"/>
</dbReference>
<dbReference type="NCBIfam" id="TIGR00152">
    <property type="entry name" value="dephospho-CoA kinase"/>
    <property type="match status" value="1"/>
</dbReference>
<dbReference type="PANTHER" id="PTHR10695:SF46">
    <property type="entry name" value="BIFUNCTIONAL COENZYME A SYNTHASE-RELATED"/>
    <property type="match status" value="1"/>
</dbReference>
<dbReference type="PANTHER" id="PTHR10695">
    <property type="entry name" value="DEPHOSPHO-COA KINASE-RELATED"/>
    <property type="match status" value="1"/>
</dbReference>
<dbReference type="Pfam" id="PF01121">
    <property type="entry name" value="CoaE"/>
    <property type="match status" value="1"/>
</dbReference>
<dbReference type="SUPFAM" id="SSF52540">
    <property type="entry name" value="P-loop containing nucleoside triphosphate hydrolases"/>
    <property type="match status" value="1"/>
</dbReference>
<dbReference type="PROSITE" id="PS51219">
    <property type="entry name" value="DPCK"/>
    <property type="match status" value="1"/>
</dbReference>
<evidence type="ECO:0000255" key="1">
    <source>
        <dbReference type="HAMAP-Rule" id="MF_00376"/>
    </source>
</evidence>